<gene>
    <name evidence="1" type="primary">dnaJ</name>
    <name type="ordered locus">AZC_0689</name>
</gene>
<comment type="function">
    <text evidence="1">Participates actively in the response to hyperosmotic and heat shock by preventing the aggregation of stress-denatured proteins and by disaggregating proteins, also in an autonomous, DnaK-independent fashion. Unfolded proteins bind initially to DnaJ; upon interaction with the DnaJ-bound protein, DnaK hydrolyzes its bound ATP, resulting in the formation of a stable complex. GrpE releases ADP from DnaK; ATP binding to DnaK triggers the release of the substrate protein, thus completing the reaction cycle. Several rounds of ATP-dependent interactions between DnaJ, DnaK and GrpE are required for fully efficient folding. Also involved, together with DnaK and GrpE, in the DNA replication of plasmids through activation of initiation proteins.</text>
</comment>
<comment type="cofactor">
    <cofactor evidence="1">
        <name>Zn(2+)</name>
        <dbReference type="ChEBI" id="CHEBI:29105"/>
    </cofactor>
    <text evidence="1">Binds 2 Zn(2+) ions per monomer.</text>
</comment>
<comment type="subunit">
    <text evidence="1">Homodimer.</text>
</comment>
<comment type="subcellular location">
    <subcellularLocation>
        <location evidence="1">Cytoplasm</location>
    </subcellularLocation>
</comment>
<comment type="domain">
    <text evidence="1">The J domain is necessary and sufficient to stimulate DnaK ATPase activity. Zinc center 1 plays an important role in the autonomous, DnaK-independent chaperone activity of DnaJ. Zinc center 2 is essential for interaction with DnaK and for DnaJ activity.</text>
</comment>
<comment type="similarity">
    <text evidence="1">Belongs to the DnaJ family.</text>
</comment>
<evidence type="ECO:0000255" key="1">
    <source>
        <dbReference type="HAMAP-Rule" id="MF_01152"/>
    </source>
</evidence>
<feature type="chain" id="PRO_1000085143" description="Chaperone protein DnaJ">
    <location>
        <begin position="1"/>
        <end position="381"/>
    </location>
</feature>
<feature type="domain" description="J" evidence="1">
    <location>
        <begin position="5"/>
        <end position="70"/>
    </location>
</feature>
<feature type="repeat" description="CXXCXGXG motif">
    <location>
        <begin position="149"/>
        <end position="156"/>
    </location>
</feature>
<feature type="repeat" description="CXXCXGXG motif">
    <location>
        <begin position="166"/>
        <end position="173"/>
    </location>
</feature>
<feature type="repeat" description="CXXCXGXG motif">
    <location>
        <begin position="188"/>
        <end position="195"/>
    </location>
</feature>
<feature type="repeat" description="CXXCXGXG motif">
    <location>
        <begin position="202"/>
        <end position="209"/>
    </location>
</feature>
<feature type="zinc finger region" description="CR-type" evidence="1">
    <location>
        <begin position="136"/>
        <end position="214"/>
    </location>
</feature>
<feature type="binding site" evidence="1">
    <location>
        <position position="149"/>
    </location>
    <ligand>
        <name>Zn(2+)</name>
        <dbReference type="ChEBI" id="CHEBI:29105"/>
        <label>1</label>
    </ligand>
</feature>
<feature type="binding site" evidence="1">
    <location>
        <position position="152"/>
    </location>
    <ligand>
        <name>Zn(2+)</name>
        <dbReference type="ChEBI" id="CHEBI:29105"/>
        <label>1</label>
    </ligand>
</feature>
<feature type="binding site" evidence="1">
    <location>
        <position position="166"/>
    </location>
    <ligand>
        <name>Zn(2+)</name>
        <dbReference type="ChEBI" id="CHEBI:29105"/>
        <label>2</label>
    </ligand>
</feature>
<feature type="binding site" evidence="1">
    <location>
        <position position="169"/>
    </location>
    <ligand>
        <name>Zn(2+)</name>
        <dbReference type="ChEBI" id="CHEBI:29105"/>
        <label>2</label>
    </ligand>
</feature>
<feature type="binding site" evidence="1">
    <location>
        <position position="188"/>
    </location>
    <ligand>
        <name>Zn(2+)</name>
        <dbReference type="ChEBI" id="CHEBI:29105"/>
        <label>2</label>
    </ligand>
</feature>
<feature type="binding site" evidence="1">
    <location>
        <position position="191"/>
    </location>
    <ligand>
        <name>Zn(2+)</name>
        <dbReference type="ChEBI" id="CHEBI:29105"/>
        <label>2</label>
    </ligand>
</feature>
<feature type="binding site" evidence="1">
    <location>
        <position position="202"/>
    </location>
    <ligand>
        <name>Zn(2+)</name>
        <dbReference type="ChEBI" id="CHEBI:29105"/>
        <label>1</label>
    </ligand>
</feature>
<feature type="binding site" evidence="1">
    <location>
        <position position="205"/>
    </location>
    <ligand>
        <name>Zn(2+)</name>
        <dbReference type="ChEBI" id="CHEBI:29105"/>
        <label>1</label>
    </ligand>
</feature>
<accession>A8IPT0</accession>
<dbReference type="EMBL" id="AP009384">
    <property type="protein sequence ID" value="BAF86687.1"/>
    <property type="molecule type" value="Genomic_DNA"/>
</dbReference>
<dbReference type="RefSeq" id="WP_012169220.1">
    <property type="nucleotide sequence ID" value="NC_009937.1"/>
</dbReference>
<dbReference type="SMR" id="A8IPT0"/>
<dbReference type="STRING" id="438753.AZC_0689"/>
<dbReference type="KEGG" id="azc:AZC_0689"/>
<dbReference type="eggNOG" id="COG0484">
    <property type="taxonomic scope" value="Bacteria"/>
</dbReference>
<dbReference type="HOGENOM" id="CLU_017633_0_7_5"/>
<dbReference type="Proteomes" id="UP000000270">
    <property type="component" value="Chromosome"/>
</dbReference>
<dbReference type="GO" id="GO:0005737">
    <property type="term" value="C:cytoplasm"/>
    <property type="evidence" value="ECO:0007669"/>
    <property type="project" value="UniProtKB-SubCell"/>
</dbReference>
<dbReference type="GO" id="GO:0005524">
    <property type="term" value="F:ATP binding"/>
    <property type="evidence" value="ECO:0007669"/>
    <property type="project" value="InterPro"/>
</dbReference>
<dbReference type="GO" id="GO:0031072">
    <property type="term" value="F:heat shock protein binding"/>
    <property type="evidence" value="ECO:0007669"/>
    <property type="project" value="InterPro"/>
</dbReference>
<dbReference type="GO" id="GO:0051082">
    <property type="term" value="F:unfolded protein binding"/>
    <property type="evidence" value="ECO:0007669"/>
    <property type="project" value="UniProtKB-UniRule"/>
</dbReference>
<dbReference type="GO" id="GO:0008270">
    <property type="term" value="F:zinc ion binding"/>
    <property type="evidence" value="ECO:0007669"/>
    <property type="project" value="UniProtKB-UniRule"/>
</dbReference>
<dbReference type="GO" id="GO:0051085">
    <property type="term" value="P:chaperone cofactor-dependent protein refolding"/>
    <property type="evidence" value="ECO:0007669"/>
    <property type="project" value="TreeGrafter"/>
</dbReference>
<dbReference type="GO" id="GO:0006260">
    <property type="term" value="P:DNA replication"/>
    <property type="evidence" value="ECO:0007669"/>
    <property type="project" value="UniProtKB-KW"/>
</dbReference>
<dbReference type="GO" id="GO:0042026">
    <property type="term" value="P:protein refolding"/>
    <property type="evidence" value="ECO:0007669"/>
    <property type="project" value="TreeGrafter"/>
</dbReference>
<dbReference type="GO" id="GO:0009408">
    <property type="term" value="P:response to heat"/>
    <property type="evidence" value="ECO:0007669"/>
    <property type="project" value="InterPro"/>
</dbReference>
<dbReference type="CDD" id="cd06257">
    <property type="entry name" value="DnaJ"/>
    <property type="match status" value="1"/>
</dbReference>
<dbReference type="CDD" id="cd10747">
    <property type="entry name" value="DnaJ_C"/>
    <property type="match status" value="1"/>
</dbReference>
<dbReference type="CDD" id="cd10719">
    <property type="entry name" value="DnaJ_zf"/>
    <property type="match status" value="1"/>
</dbReference>
<dbReference type="FunFam" id="1.10.287.110:FF:000034">
    <property type="entry name" value="Chaperone protein DnaJ"/>
    <property type="match status" value="1"/>
</dbReference>
<dbReference type="FunFam" id="2.10.230.10:FF:000002">
    <property type="entry name" value="Molecular chaperone DnaJ"/>
    <property type="match status" value="1"/>
</dbReference>
<dbReference type="FunFam" id="2.60.260.20:FF:000004">
    <property type="entry name" value="Molecular chaperone DnaJ"/>
    <property type="match status" value="1"/>
</dbReference>
<dbReference type="Gene3D" id="1.10.287.110">
    <property type="entry name" value="DnaJ domain"/>
    <property type="match status" value="1"/>
</dbReference>
<dbReference type="Gene3D" id="2.10.230.10">
    <property type="entry name" value="Heat shock protein DnaJ, cysteine-rich domain"/>
    <property type="match status" value="1"/>
</dbReference>
<dbReference type="Gene3D" id="2.60.260.20">
    <property type="entry name" value="Urease metallochaperone UreE, N-terminal domain"/>
    <property type="match status" value="2"/>
</dbReference>
<dbReference type="HAMAP" id="MF_01152">
    <property type="entry name" value="DnaJ"/>
    <property type="match status" value="1"/>
</dbReference>
<dbReference type="InterPro" id="IPR012724">
    <property type="entry name" value="DnaJ"/>
</dbReference>
<dbReference type="InterPro" id="IPR002939">
    <property type="entry name" value="DnaJ_C"/>
</dbReference>
<dbReference type="InterPro" id="IPR001623">
    <property type="entry name" value="DnaJ_domain"/>
</dbReference>
<dbReference type="InterPro" id="IPR018253">
    <property type="entry name" value="DnaJ_domain_CS"/>
</dbReference>
<dbReference type="InterPro" id="IPR008971">
    <property type="entry name" value="HSP40/DnaJ_pept-bd"/>
</dbReference>
<dbReference type="InterPro" id="IPR001305">
    <property type="entry name" value="HSP_DnaJ_Cys-rich_dom"/>
</dbReference>
<dbReference type="InterPro" id="IPR036410">
    <property type="entry name" value="HSP_DnaJ_Cys-rich_dom_sf"/>
</dbReference>
<dbReference type="InterPro" id="IPR036869">
    <property type="entry name" value="J_dom_sf"/>
</dbReference>
<dbReference type="NCBIfam" id="TIGR02349">
    <property type="entry name" value="DnaJ_bact"/>
    <property type="match status" value="1"/>
</dbReference>
<dbReference type="NCBIfam" id="NF008035">
    <property type="entry name" value="PRK10767.1"/>
    <property type="match status" value="1"/>
</dbReference>
<dbReference type="PANTHER" id="PTHR43096:SF48">
    <property type="entry name" value="CHAPERONE PROTEIN DNAJ"/>
    <property type="match status" value="1"/>
</dbReference>
<dbReference type="PANTHER" id="PTHR43096">
    <property type="entry name" value="DNAJ HOMOLOG 1, MITOCHONDRIAL-RELATED"/>
    <property type="match status" value="1"/>
</dbReference>
<dbReference type="Pfam" id="PF00226">
    <property type="entry name" value="DnaJ"/>
    <property type="match status" value="1"/>
</dbReference>
<dbReference type="Pfam" id="PF01556">
    <property type="entry name" value="DnaJ_C"/>
    <property type="match status" value="1"/>
</dbReference>
<dbReference type="Pfam" id="PF00684">
    <property type="entry name" value="DnaJ_CXXCXGXG"/>
    <property type="match status" value="1"/>
</dbReference>
<dbReference type="PRINTS" id="PR00625">
    <property type="entry name" value="JDOMAIN"/>
</dbReference>
<dbReference type="SMART" id="SM00271">
    <property type="entry name" value="DnaJ"/>
    <property type="match status" value="1"/>
</dbReference>
<dbReference type="SUPFAM" id="SSF46565">
    <property type="entry name" value="Chaperone J-domain"/>
    <property type="match status" value="1"/>
</dbReference>
<dbReference type="SUPFAM" id="SSF57938">
    <property type="entry name" value="DnaJ/Hsp40 cysteine-rich domain"/>
    <property type="match status" value="1"/>
</dbReference>
<dbReference type="SUPFAM" id="SSF49493">
    <property type="entry name" value="HSP40/DnaJ peptide-binding domain"/>
    <property type="match status" value="2"/>
</dbReference>
<dbReference type="PROSITE" id="PS00636">
    <property type="entry name" value="DNAJ_1"/>
    <property type="match status" value="1"/>
</dbReference>
<dbReference type="PROSITE" id="PS50076">
    <property type="entry name" value="DNAJ_2"/>
    <property type="match status" value="1"/>
</dbReference>
<dbReference type="PROSITE" id="PS51188">
    <property type="entry name" value="ZF_CR"/>
    <property type="match status" value="1"/>
</dbReference>
<reference key="1">
    <citation type="submission" date="2007-04" db="EMBL/GenBank/DDBJ databases">
        <title>Complete genome sequence of the nitrogen-fixing bacterium Azorhizobium caulinodans ORS571.</title>
        <authorList>
            <person name="Lee K.B."/>
            <person name="Backer P.D."/>
            <person name="Aono T."/>
            <person name="Liu C.T."/>
            <person name="Suzuki S."/>
            <person name="Suzuki T."/>
            <person name="Kaneko T."/>
            <person name="Yamada M."/>
            <person name="Tabata S."/>
            <person name="Kupfer D.M."/>
            <person name="Najar F.Z."/>
            <person name="Wiley G.B."/>
            <person name="Roe B."/>
            <person name="Binnewies T."/>
            <person name="Ussery D."/>
            <person name="Vereecke D."/>
            <person name="Gevers D."/>
            <person name="Holsters M."/>
            <person name="Oyaizu H."/>
        </authorList>
    </citation>
    <scope>NUCLEOTIDE SEQUENCE [LARGE SCALE GENOMIC DNA]</scope>
    <source>
        <strain>ATCC 43989 / DSM 5975 / JCM 20966 / LMG 6465 / NBRC 14845 / NCIMB 13405 / ORS 571</strain>
    </source>
</reference>
<keyword id="KW-0143">Chaperone</keyword>
<keyword id="KW-0963">Cytoplasm</keyword>
<keyword id="KW-0235">DNA replication</keyword>
<keyword id="KW-0479">Metal-binding</keyword>
<keyword id="KW-1185">Reference proteome</keyword>
<keyword id="KW-0677">Repeat</keyword>
<keyword id="KW-0346">Stress response</keyword>
<keyword id="KW-0862">Zinc</keyword>
<keyword id="KW-0863">Zinc-finger</keyword>
<name>DNAJ_AZOC5</name>
<protein>
    <recommendedName>
        <fullName evidence="1">Chaperone protein DnaJ</fullName>
    </recommendedName>
</protein>
<proteinExistence type="inferred from homology"/>
<organism>
    <name type="scientific">Azorhizobium caulinodans (strain ATCC 43989 / DSM 5975 / JCM 20966 / LMG 6465 / NBRC 14845 / NCIMB 13405 / ORS 571)</name>
    <dbReference type="NCBI Taxonomy" id="438753"/>
    <lineage>
        <taxon>Bacteria</taxon>
        <taxon>Pseudomonadati</taxon>
        <taxon>Pseudomonadota</taxon>
        <taxon>Alphaproteobacteria</taxon>
        <taxon>Hyphomicrobiales</taxon>
        <taxon>Xanthobacteraceae</taxon>
        <taxon>Azorhizobium</taxon>
    </lineage>
</organism>
<sequence>MAKRDYYEVLGCDRGADETVLKASFRKLAMKWHPDKNPGDPEAEIRFKEISEAYEVLKDPQKRGAYDRYGHAAFENGGGPGGAGFNADFASTFADIFDDLFGGSMGRSGARSAGGRARGADLRYNMDITLEEAFSGKTAQISIPTSISCEVCSGSGAKAGTQPKTCRTCNGAGKIRHAQGFFTLERTCPSCQGRGTVIEDPCPNCGGAGRVTRERTLQVQIPAGVEDGTRIRLGGEGEAGVRGGPPGDLYIFLSIEPHTFFQREGADLYCRAPISMVTAALGGTVEVPTIGGEKTKVKIPEGTQSGKRLRLPGAGMPVLRSRSFGDMYVQVVVETPQNLTKRQKELLAEFEGLSSTDTHPESNGFFAKMKDFFQGASSDND</sequence>